<dbReference type="EMBL" id="AF136156">
    <property type="protein sequence ID" value="AAD24488.1"/>
    <property type="molecule type" value="Genomic_DNA"/>
</dbReference>
<dbReference type="EMBL" id="CU329672">
    <property type="protein sequence ID" value="CAB57850.1"/>
    <property type="molecule type" value="Genomic_DNA"/>
</dbReference>
<dbReference type="PIR" id="T40859">
    <property type="entry name" value="T40859"/>
</dbReference>
<dbReference type="RefSeq" id="NP_588204.1">
    <property type="nucleotide sequence ID" value="NM_001023194.2"/>
</dbReference>
<dbReference type="SMR" id="Q10426"/>
<dbReference type="BioGRID" id="275623">
    <property type="interactions" value="237"/>
</dbReference>
<dbReference type="ComplexPortal" id="CPX-9241">
    <property type="entry name" value="CLR4 E3 ubiquitin ligase/methyltransferase complex"/>
</dbReference>
<dbReference type="DIP" id="DIP-35634N"/>
<dbReference type="FunCoup" id="Q10426">
    <property type="interactions" value="293"/>
</dbReference>
<dbReference type="IntAct" id="Q10426">
    <property type="interactions" value="9"/>
</dbReference>
<dbReference type="STRING" id="284812.Q10426"/>
<dbReference type="iPTMnet" id="Q10426"/>
<dbReference type="PaxDb" id="4896-SPCC11E10.08.1"/>
<dbReference type="EnsemblFungi" id="SPCC11E10.08.1">
    <property type="protein sequence ID" value="SPCC11E10.08.1:pep"/>
    <property type="gene ID" value="SPCC11E10.08"/>
</dbReference>
<dbReference type="GeneID" id="2539050"/>
<dbReference type="KEGG" id="spo:2539050"/>
<dbReference type="PomBase" id="SPCC11E10.08">
    <property type="gene designation" value="rik1"/>
</dbReference>
<dbReference type="VEuPathDB" id="FungiDB:SPCC11E10.08"/>
<dbReference type="eggNOG" id="KOG1897">
    <property type="taxonomic scope" value="Eukaryota"/>
</dbReference>
<dbReference type="HOGENOM" id="CLU_290548_0_0_1"/>
<dbReference type="InParanoid" id="Q10426"/>
<dbReference type="OMA" id="PHMVYGF"/>
<dbReference type="PhylomeDB" id="Q10426"/>
<dbReference type="PRO" id="PR:Q10426"/>
<dbReference type="Proteomes" id="UP000002485">
    <property type="component" value="Chromosome III"/>
</dbReference>
<dbReference type="GO" id="GO:0043494">
    <property type="term" value="C:CLRC complex"/>
    <property type="evidence" value="ECO:0000314"/>
    <property type="project" value="PomBase"/>
</dbReference>
<dbReference type="GO" id="GO:0005737">
    <property type="term" value="C:cytoplasm"/>
    <property type="evidence" value="ECO:0007669"/>
    <property type="project" value="UniProtKB-KW"/>
</dbReference>
<dbReference type="GO" id="GO:0031934">
    <property type="term" value="C:mating-type region heterochromatin"/>
    <property type="evidence" value="ECO:0000314"/>
    <property type="project" value="PomBase"/>
</dbReference>
<dbReference type="GO" id="GO:0005634">
    <property type="term" value="C:nucleus"/>
    <property type="evidence" value="ECO:0007005"/>
    <property type="project" value="PomBase"/>
</dbReference>
<dbReference type="GO" id="GO:0005721">
    <property type="term" value="C:pericentric heterochromatin"/>
    <property type="evidence" value="ECO:0000314"/>
    <property type="project" value="PomBase"/>
</dbReference>
<dbReference type="GO" id="GO:0033553">
    <property type="term" value="C:rDNA heterochromatin"/>
    <property type="evidence" value="ECO:0000314"/>
    <property type="project" value="PomBase"/>
</dbReference>
<dbReference type="GO" id="GO:0005816">
    <property type="term" value="C:spindle pole body"/>
    <property type="evidence" value="ECO:0007669"/>
    <property type="project" value="UniProtKB-SubCell"/>
</dbReference>
<dbReference type="GO" id="GO:0140720">
    <property type="term" value="C:subtelomeric heterochromatin"/>
    <property type="evidence" value="ECO:0000314"/>
    <property type="project" value="PomBase"/>
</dbReference>
<dbReference type="GO" id="GO:0003676">
    <property type="term" value="F:nucleic acid binding"/>
    <property type="evidence" value="ECO:0007669"/>
    <property type="project" value="InterPro"/>
</dbReference>
<dbReference type="GO" id="GO:0031507">
    <property type="term" value="P:heterochromatin formation"/>
    <property type="evidence" value="ECO:0000315"/>
    <property type="project" value="PomBase"/>
</dbReference>
<dbReference type="GO" id="GO:0044821">
    <property type="term" value="P:meiotic telomere tethering at nuclear periphery"/>
    <property type="evidence" value="ECO:0000315"/>
    <property type="project" value="PomBase"/>
</dbReference>
<dbReference type="GO" id="GO:0031508">
    <property type="term" value="P:pericentric heterochromatin formation"/>
    <property type="evidence" value="ECO:0000269"/>
    <property type="project" value="PomBase"/>
</dbReference>
<dbReference type="GO" id="GO:0016070">
    <property type="term" value="P:RNA metabolic process"/>
    <property type="evidence" value="ECO:0007669"/>
    <property type="project" value="UniProtKB-ARBA"/>
</dbReference>
<dbReference type="GO" id="GO:0030466">
    <property type="term" value="P:silent mating-type cassette heterochromatin formation"/>
    <property type="evidence" value="ECO:0000269"/>
    <property type="project" value="PomBase"/>
</dbReference>
<dbReference type="GO" id="GO:0141194">
    <property type="term" value="P:siRNA-mediated heterochromatin formation"/>
    <property type="evidence" value="ECO:0000269"/>
    <property type="project" value="PomBase"/>
</dbReference>
<dbReference type="GO" id="GO:0031509">
    <property type="term" value="P:subtelomeric heterochromatin formation"/>
    <property type="evidence" value="ECO:0000269"/>
    <property type="project" value="PomBase"/>
</dbReference>
<dbReference type="Gene3D" id="2.130.10.10">
    <property type="entry name" value="YVTN repeat-like/Quinoprotein amine dehydrogenase"/>
    <property type="match status" value="3"/>
</dbReference>
<dbReference type="InterPro" id="IPR018846">
    <property type="entry name" value="Beta-prop_RSE1/DDB1/CPSF1_1st"/>
</dbReference>
<dbReference type="InterPro" id="IPR004871">
    <property type="entry name" value="Cleavage/polyA-sp_fac_asu_C"/>
</dbReference>
<dbReference type="InterPro" id="IPR050358">
    <property type="entry name" value="RSE1/DDB1/CFT1/CPSF1"/>
</dbReference>
<dbReference type="InterPro" id="IPR015943">
    <property type="entry name" value="WD40/YVTN_repeat-like_dom_sf"/>
</dbReference>
<dbReference type="PANTHER" id="PTHR10644">
    <property type="entry name" value="DNA REPAIR/RNA PROCESSING CPSF FAMILY"/>
    <property type="match status" value="1"/>
</dbReference>
<dbReference type="Pfam" id="PF10433">
    <property type="entry name" value="Beta-prop_RSE1_1st"/>
    <property type="match status" value="1"/>
</dbReference>
<dbReference type="Pfam" id="PF23726">
    <property type="entry name" value="Beta-prop_RSE1_2nd"/>
    <property type="match status" value="1"/>
</dbReference>
<dbReference type="Pfam" id="PF03178">
    <property type="entry name" value="CPSF_A"/>
    <property type="match status" value="1"/>
</dbReference>
<keyword id="KW-0156">Chromatin regulator</keyword>
<keyword id="KW-0158">Chromosome</keyword>
<keyword id="KW-0963">Cytoplasm</keyword>
<keyword id="KW-0206">Cytoskeleton</keyword>
<keyword id="KW-0903">Direct protein sequencing</keyword>
<keyword id="KW-0539">Nucleus</keyword>
<keyword id="KW-1185">Reference proteome</keyword>
<keyword id="KW-0804">Transcription</keyword>
<keyword id="KW-0805">Transcription regulation</keyword>
<proteinExistence type="evidence at protein level"/>
<gene>
    <name type="primary">rik1</name>
    <name type="ORF">SPCC11E10.08</name>
</gene>
<protein>
    <recommendedName>
        <fullName>Chromatin modification-related protein rik1</fullName>
    </recommendedName>
    <alternativeName>
        <fullName>Silencing protein rik1</fullName>
    </alternativeName>
</protein>
<name>RIK1_SCHPO</name>
<reference key="1">
    <citation type="submission" date="1999-03" db="EMBL/GenBank/DDBJ databases">
        <title>The rik1 gene from S. pombe required for formation of silent heterochromatin encodes a protein related to Xeroderma pigmentosum group E DNA-binding protein.</title>
        <authorList>
            <person name="Nielsen O."/>
        </authorList>
    </citation>
    <scope>NUCLEOTIDE SEQUENCE [GENOMIC DNA]</scope>
    <source>
        <strain>EG355</strain>
    </source>
</reference>
<reference key="2">
    <citation type="journal article" date="2002" name="Nature">
        <title>The genome sequence of Schizosaccharomyces pombe.</title>
        <authorList>
            <person name="Wood V."/>
            <person name="Gwilliam R."/>
            <person name="Rajandream M.A."/>
            <person name="Lyne M.H."/>
            <person name="Lyne R."/>
            <person name="Stewart A."/>
            <person name="Sgouros J.G."/>
            <person name="Peat N."/>
            <person name="Hayles J."/>
            <person name="Baker S.G."/>
            <person name="Basham D."/>
            <person name="Bowman S."/>
            <person name="Brooks K."/>
            <person name="Brown D."/>
            <person name="Brown S."/>
            <person name="Chillingworth T."/>
            <person name="Churcher C.M."/>
            <person name="Collins M."/>
            <person name="Connor R."/>
            <person name="Cronin A."/>
            <person name="Davis P."/>
            <person name="Feltwell T."/>
            <person name="Fraser A."/>
            <person name="Gentles S."/>
            <person name="Goble A."/>
            <person name="Hamlin N."/>
            <person name="Harris D.E."/>
            <person name="Hidalgo J."/>
            <person name="Hodgson G."/>
            <person name="Holroyd S."/>
            <person name="Hornsby T."/>
            <person name="Howarth S."/>
            <person name="Huckle E.J."/>
            <person name="Hunt S."/>
            <person name="Jagels K."/>
            <person name="James K.D."/>
            <person name="Jones L."/>
            <person name="Jones M."/>
            <person name="Leather S."/>
            <person name="McDonald S."/>
            <person name="McLean J."/>
            <person name="Mooney P."/>
            <person name="Moule S."/>
            <person name="Mungall K.L."/>
            <person name="Murphy L.D."/>
            <person name="Niblett D."/>
            <person name="Odell C."/>
            <person name="Oliver K."/>
            <person name="O'Neil S."/>
            <person name="Pearson D."/>
            <person name="Quail M.A."/>
            <person name="Rabbinowitsch E."/>
            <person name="Rutherford K.M."/>
            <person name="Rutter S."/>
            <person name="Saunders D."/>
            <person name="Seeger K."/>
            <person name="Sharp S."/>
            <person name="Skelton J."/>
            <person name="Simmonds M.N."/>
            <person name="Squares R."/>
            <person name="Squares S."/>
            <person name="Stevens K."/>
            <person name="Taylor K."/>
            <person name="Taylor R.G."/>
            <person name="Tivey A."/>
            <person name="Walsh S.V."/>
            <person name="Warren T."/>
            <person name="Whitehead S."/>
            <person name="Woodward J.R."/>
            <person name="Volckaert G."/>
            <person name="Aert R."/>
            <person name="Robben J."/>
            <person name="Grymonprez B."/>
            <person name="Weltjens I."/>
            <person name="Vanstreels E."/>
            <person name="Rieger M."/>
            <person name="Schaefer M."/>
            <person name="Mueller-Auer S."/>
            <person name="Gabel C."/>
            <person name="Fuchs M."/>
            <person name="Duesterhoeft A."/>
            <person name="Fritzc C."/>
            <person name="Holzer E."/>
            <person name="Moestl D."/>
            <person name="Hilbert H."/>
            <person name="Borzym K."/>
            <person name="Langer I."/>
            <person name="Beck A."/>
            <person name="Lehrach H."/>
            <person name="Reinhardt R."/>
            <person name="Pohl T.M."/>
            <person name="Eger P."/>
            <person name="Zimmermann W."/>
            <person name="Wedler H."/>
            <person name="Wambutt R."/>
            <person name="Purnelle B."/>
            <person name="Goffeau A."/>
            <person name="Cadieu E."/>
            <person name="Dreano S."/>
            <person name="Gloux S."/>
            <person name="Lelaure V."/>
            <person name="Mottier S."/>
            <person name="Galibert F."/>
            <person name="Aves S.J."/>
            <person name="Xiang Z."/>
            <person name="Hunt C."/>
            <person name="Moore K."/>
            <person name="Hurst S.M."/>
            <person name="Lucas M."/>
            <person name="Rochet M."/>
            <person name="Gaillardin C."/>
            <person name="Tallada V.A."/>
            <person name="Garzon A."/>
            <person name="Thode G."/>
            <person name="Daga R.R."/>
            <person name="Cruzado L."/>
            <person name="Jimenez J."/>
            <person name="Sanchez M."/>
            <person name="del Rey F."/>
            <person name="Benito J."/>
            <person name="Dominguez A."/>
            <person name="Revuelta J.L."/>
            <person name="Moreno S."/>
            <person name="Armstrong J."/>
            <person name="Forsburg S.L."/>
            <person name="Cerutti L."/>
            <person name="Lowe T."/>
            <person name="McCombie W.R."/>
            <person name="Paulsen I."/>
            <person name="Potashkin J."/>
            <person name="Shpakovski G.V."/>
            <person name="Ussery D."/>
            <person name="Barrell B.G."/>
            <person name="Nurse P."/>
        </authorList>
    </citation>
    <scope>NUCLEOTIDE SEQUENCE [LARGE SCALE GENOMIC DNA]</scope>
    <source>
        <strain>972 / ATCC 24843</strain>
    </source>
</reference>
<reference key="3">
    <citation type="journal article" date="2005" name="Genes Dev.">
        <title>A Rik1-associated, cullin-dependent E3 ubiquitin ligase is essential for heterochromatin formation.</title>
        <authorList>
            <person name="Horn P.J."/>
            <person name="Bastie J.-N."/>
            <person name="Peterson C.L."/>
        </authorList>
    </citation>
    <scope>PARTIAL PROTEIN SEQUENCE</scope>
    <scope>IDENTIFICATION IN THE RIK1-ASSOCIATED E3 UBIQUITIN LIGASE COMPLEX</scope>
    <scope>FUNCTION</scope>
</reference>
<reference key="4">
    <citation type="journal article" date="1994" name="Genetics">
        <title>Mutations in rik1, clr2, clr3 and clr4 genes asymmetrically derepress the silent mating-type loci in fission yeast.</title>
        <authorList>
            <person name="Ekwall K."/>
            <person name="Ruusala T."/>
        </authorList>
    </citation>
    <scope>FUNCTION</scope>
</reference>
<reference key="5">
    <citation type="journal article" date="1995" name="Genes Dev.">
        <title>Mutations derepressing silent centromeric domains in fission yeast disrupt chromosome segregation.</title>
        <authorList>
            <person name="Allshire R.C."/>
            <person name="Nimmo E.R."/>
            <person name="Ekwall K."/>
            <person name="Javerzat J.-P."/>
            <person name="Cranston G."/>
        </authorList>
    </citation>
    <scope>FUNCTION</scope>
    <scope>DISRUPTION PHENOTYPE</scope>
</reference>
<reference key="6">
    <citation type="journal article" date="2000" name="Genes Dev.">
        <title>Distinct protein interaction domains and protein spreading in a complex centromere.</title>
        <authorList>
            <person name="Partridge J.F."/>
            <person name="Borgstroem B."/>
            <person name="Allshire R.C."/>
        </authorList>
    </citation>
    <scope>FUNCTION</scope>
    <scope>INTERACTION WITH CHP1</scope>
</reference>
<reference key="7">
    <citation type="journal article" date="2004" name="EMBO J.">
        <title>A chromodomain protein, Chp1, is required for the establishment of heterochromatin in fission yeast.</title>
        <authorList>
            <person name="Sadaie M."/>
            <person name="Iida T."/>
            <person name="Urano T."/>
            <person name="Nakayama J."/>
        </authorList>
    </citation>
    <scope>FUNCTION</scope>
</reference>
<reference key="8">
    <citation type="journal article" date="2004" name="J. Cell Biol.">
        <title>The fission yeast heterochromatin protein Rik1 is required for telomere clustering during meiosis.</title>
        <authorList>
            <person name="Tuzon C.T."/>
            <person name="Borgstroem B."/>
            <person name="Weilguny D."/>
            <person name="Egel R."/>
            <person name="Cooper J.P."/>
            <person name="Nielsen O."/>
        </authorList>
    </citation>
    <scope>FUNCTION</scope>
</reference>
<reference key="9">
    <citation type="journal article" date="2005" name="Nat. Cell Biol.">
        <title>Ubiquitin ligase component Cul4 associates with Clr4 histone methyltransferase to assemble heterochromatin.</title>
        <authorList>
            <person name="Jia S."/>
            <person name="Kobayashi R."/>
            <person name="Grewal S.I.S."/>
        </authorList>
    </citation>
    <scope>PROTEIN SEQUENCE OF 663-692 AND 922-965</scope>
    <scope>INTERACTION WITH CUL4</scope>
</reference>
<reference key="10">
    <citation type="journal article" date="2005" name="RNA Biol.">
        <title>A cullin E3 ubiquitin ligase complex associates with Rik1 and the Clr4 histone H3-K9 methyltransferase and is required for RNAi-mediated heterochromatin formation.</title>
        <authorList>
            <person name="Hong E.J."/>
            <person name="Villen J."/>
            <person name="Gerace E.L."/>
            <person name="Gygi S.P."/>
            <person name="Moazed D."/>
        </authorList>
    </citation>
    <scope>SUBUNIT</scope>
</reference>
<reference key="11">
    <citation type="journal article" date="2006" name="Nat. Biotechnol.">
        <title>ORFeome cloning and global analysis of protein localization in the fission yeast Schizosaccharomyces pombe.</title>
        <authorList>
            <person name="Matsuyama A."/>
            <person name="Arai R."/>
            <person name="Yashiroda Y."/>
            <person name="Shirai A."/>
            <person name="Kamata A."/>
            <person name="Sekido S."/>
            <person name="Kobayashi Y."/>
            <person name="Hashimoto A."/>
            <person name="Hamamoto M."/>
            <person name="Hiraoka Y."/>
            <person name="Horinouchi S."/>
            <person name="Yoshida M."/>
        </authorList>
    </citation>
    <scope>SUBCELLULAR LOCATION [LARGE SCALE ANALYSIS]</scope>
</reference>
<reference key="12">
    <citation type="journal article" date="2008" name="Nat. Struct. Mol. Biol.">
        <title>Roles of the Clr4 methyltransferase complex in nucleation, spreading and maintenance of heterochromatin.</title>
        <authorList>
            <person name="Zhang K."/>
            <person name="Mosch K."/>
            <person name="Fischle W."/>
            <person name="Grewal S.I."/>
        </authorList>
    </citation>
    <scope>FUNCTION</scope>
    <scope>SUBCELLULAR LOCATION</scope>
</reference>
<reference key="13">
    <citation type="journal article" date="2019" name="EMBO Rep.">
        <title>H3K14 ubiquitylation promotes H3K9 methylation for heterochromatin assembly.</title>
        <authorList>
            <person name="Oya E."/>
            <person name="Nakagawa R."/>
            <person name="Yoshimura Y."/>
            <person name="Tanaka M."/>
            <person name="Nishibuchi G."/>
            <person name="Machida S."/>
            <person name="Shirai A."/>
            <person name="Ekwall K."/>
            <person name="Kurumizaka H."/>
            <person name="Tagami H."/>
            <person name="Nakayama J.I."/>
        </authorList>
    </citation>
    <scope>FUNCTION</scope>
</reference>
<feature type="chain" id="PRO_0000097338" description="Chromatin modification-related protein rik1">
    <location>
        <begin position="1"/>
        <end position="1040"/>
    </location>
</feature>
<feature type="sequence conflict" description="In Ref. 1; AAD24488." evidence="12" ref="1">
    <original>G</original>
    <variation>A</variation>
    <location>
        <position position="263"/>
    </location>
</feature>
<feature type="sequence conflict" description="In Ref. 1; AAD24488." evidence="12" ref="1">
    <original>F</original>
    <variation>N</variation>
    <location>
        <position position="446"/>
    </location>
</feature>
<evidence type="ECO:0000269" key="1">
    <source>
    </source>
</evidence>
<evidence type="ECO:0000269" key="2">
    <source>
    </source>
</evidence>
<evidence type="ECO:0000269" key="3">
    <source>
    </source>
</evidence>
<evidence type="ECO:0000269" key="4">
    <source>
    </source>
</evidence>
<evidence type="ECO:0000269" key="5">
    <source>
    </source>
</evidence>
<evidence type="ECO:0000269" key="6">
    <source>
    </source>
</evidence>
<evidence type="ECO:0000269" key="7">
    <source>
    </source>
</evidence>
<evidence type="ECO:0000269" key="8">
    <source>
    </source>
</evidence>
<evidence type="ECO:0000269" key="9">
    <source>
    </source>
</evidence>
<evidence type="ECO:0000269" key="10">
    <source>
    </source>
</evidence>
<evidence type="ECO:0000269" key="11">
    <source>
    </source>
</evidence>
<evidence type="ECO:0000305" key="12"/>
<organism>
    <name type="scientific">Schizosaccharomyces pombe (strain 972 / ATCC 24843)</name>
    <name type="common">Fission yeast</name>
    <dbReference type="NCBI Taxonomy" id="284812"/>
    <lineage>
        <taxon>Eukaryota</taxon>
        <taxon>Fungi</taxon>
        <taxon>Dikarya</taxon>
        <taxon>Ascomycota</taxon>
        <taxon>Taphrinomycotina</taxon>
        <taxon>Schizosaccharomycetes</taxon>
        <taxon>Schizosaccharomycetales</taxon>
        <taxon>Schizosaccharomycetaceae</taxon>
        <taxon>Schizosaccharomyces</taxon>
    </lineage>
</organism>
<sequence>MALCVHSFWATAVDTATSCHFISSENCLVLLQALKINIYLCSEVHGLQFFTSIPLFSTVKHIRPYRPPGLDRDYLFVVLNDDTYFSIYWDEDYQKVIVDHPPVRYRVTFPWNRNAKSYCLVDLRMRAIFLSIDEISMICIRILSAEERLKTGRSIDSGFPFSFPVHLIYDMCILNDSSTPTLVVLHSDGLDCYVTAFLLDLSSKSLGKGIRLFERVKPSMIMPFGKRGLLVFESLFIHCMYRGNFVTINGPCTTYMHWTPLKGQKMHYIVCDTNGYLFGVYSSILGKNKWSLVMERLPIPPFDFITSLNSIHEGLLFIGSKNSESKLINLSTLKDVDSIPNLGPIHDLLVLKNDIEKSFLVCAGTPRNASLIYFQHALKLDILGQTKISGILRAMVLPSYPEHKLFLGFPSETVAFNIKEDFQLELDPSLSTKERTIALSGTNGEFVQVTSTFLCIYDSAKRSRLVYIEKITNAACYQEYSAIVINGTALAIFKKDTEVARKVFESEISCLDFSAQFQIGVGFWSKQVMILTFSDNSSISCAFQTNVPSLPRNIILEGVGVDRNLLLVSSGSGEFKSYVLFKNNLVFSETKHFGTTPVSFRRFTMNIGTYIICNNDCPHMVYGFNGALCYMPLSMPQSYDVCQFRDNSGKDFLISVSLGGLKFLQLNPLPELTPRKVLLEHVPLQAIIFQNKLLLRTLENRYEDYESYKENYHLELVDSYDDNSFRVFSFTENERCEKVLKINESSLLVGTSIIEQDKLVPVNGRLILLEFEKELQSLKVVSSMVLSAAVIDLGVYNDRYIVAFGQQVAIVKLTEERLMIDSRISLGSIVLQLIVEGNEIAIADSIGRFTIMYFDGQKFIVVARYLFGENIVKAALYEGTVYIIATNSGLLKLLRYNKDAKNFNDRFICESVYHLHDKVSKFQNFPITNTNSFLEPKMLFATEIGAIGSIVSLKDKELELEELTRKIRKLKFSYLSSMDYESIEADLISPVPFIDGDLVIDVKRWASSELFRLCRSVEHRESLNSYQKVQALLEEIQSLC</sequence>
<comment type="function">
    <text evidence="1 2 3 4 7 8 9 10 11">Component of the Clr4 methyltransferase complex (ClrC) which contributes to the establishment of heterochromatin by specifically methylating histone H3 to form H3K9me (PubMed:15372076, PubMed:16024659, PubMed:8138176). ClrC preferentially ubiquitylates H3K14 and ClrC-mediated H3 ubiquitination promotes clr4 methyltransferase activity for the methylation of H3K9 (PubMed:31468675). H3K9me represents a specific tag for epigenetic transcriptional repression by recruiting swi6/HP1 to methylated histones which leads to transcriptional silencing within centromeric heterochromatin, telomeric regions and at the silent mating-type loci (PubMed:10766735, PubMed:16024659, PubMed:7851795, PubMed:8138176). Rik1 is involved in the RNAi-mediated targeting of ClrC to heterochromatic repeat elements (PubMed:17114925, PubMed:18345014). Rik1 also has a function in meiotic telomere clustering (PubMed:15197176).</text>
</comment>
<comment type="subunit">
    <text evidence="1 4 5 7">Component of the Clr4 methyltransferase complex (ClrC) composed of at least clr4, rik1, pcu4, rbx1, raf1 and raf2. The cullin pcu4, rik1, raf1, raf2 and the ring-box protein rbx1 are components of an E3 ubiquitin ligase, whose activity is essential for heterochromatin assembly.</text>
</comment>
<comment type="interaction">
    <interactant intactId="EBI-1111936">
        <id>Q10426</id>
    </interactant>
    <interactant intactId="EBI-421832">
        <id>Q10103</id>
        <label>chp1</label>
    </interactant>
    <organismsDiffer>false</organismsDiffer>
    <experiments>2</experiments>
</comment>
<comment type="interaction">
    <interactant intactId="EBI-1111936">
        <id>Q10426</id>
    </interactant>
    <interactant intactId="EBI-354657">
        <id>O60016</id>
        <label>clr4</label>
    </interactant>
    <organismsDiffer>false</organismsDiffer>
    <experiments>3</experiments>
</comment>
<comment type="interaction">
    <interactant intactId="EBI-1111936">
        <id>Q10426</id>
    </interactant>
    <interactant intactId="EBI-1112091">
        <id>P04913</id>
        <label>htb1</label>
    </interactant>
    <organismsDiffer>false</organismsDiffer>
    <experiments>2</experiments>
</comment>
<comment type="interaction">
    <interactant intactId="EBI-1111936">
        <id>Q10426</id>
    </interactant>
    <interactant intactId="EBI-904890">
        <id>O14122</id>
        <label>pcu4</label>
    </interactant>
    <organismsDiffer>false</organismsDiffer>
    <experiments>3</experiments>
</comment>
<comment type="interaction">
    <interactant intactId="EBI-1111936">
        <id>Q10426</id>
    </interactant>
    <interactant intactId="EBI-904913">
        <id>O74910</id>
        <label>raf1</label>
    </interactant>
    <organismsDiffer>false</organismsDiffer>
    <experiments>3</experiments>
</comment>
<comment type="interaction">
    <interactant intactId="EBI-1111936">
        <id>Q10426</id>
    </interactant>
    <interactant intactId="EBI-2651917">
        <id>O94276</id>
        <label>SPBP8B7.28c</label>
    </interactant>
    <organismsDiffer>false</organismsDiffer>
    <experiments>3</experiments>
</comment>
<comment type="subcellular location">
    <subcellularLocation>
        <location evidence="6 8">Nucleus</location>
    </subcellularLocation>
    <subcellularLocation>
        <location evidence="6">Cytoplasm</location>
        <location evidence="6">Cytoskeleton</location>
        <location evidence="6">Microtubule organizing center</location>
        <location evidence="6">Spindle pole body</location>
    </subcellularLocation>
    <subcellularLocation>
        <location evidence="8">Chromosome</location>
    </subcellularLocation>
</comment>
<comment type="disruption phenotype">
    <text evidence="10">Cells show derepressed silent mating-type cassettes.</text>
</comment>
<comment type="similarity">
    <text evidence="12">Belongs to the DDB1 family.</text>
</comment>
<accession>Q10426</accession>
<accession>Q9USN9</accession>
<accession>Q9UUL7</accession>